<dbReference type="EMBL" id="AK030670">
    <property type="protein sequence ID" value="BAC27072.1"/>
    <property type="molecule type" value="mRNA"/>
</dbReference>
<dbReference type="EMBL" id="CH466520">
    <property type="protein sequence ID" value="EDL39854.1"/>
    <property type="molecule type" value="Genomic_DNA"/>
</dbReference>
<dbReference type="EMBL" id="BC117990">
    <property type="protein sequence ID" value="AAI17991.1"/>
    <property type="molecule type" value="mRNA"/>
</dbReference>
<dbReference type="EMBL" id="BC117991">
    <property type="protein sequence ID" value="AAI17992.1"/>
    <property type="molecule type" value="mRNA"/>
</dbReference>
<dbReference type="CCDS" id="CCDS15213.1">
    <molecule id="Q8CDC0-1"/>
</dbReference>
<dbReference type="RefSeq" id="NP_766440.2">
    <molecule id="Q8CDC0-1"/>
    <property type="nucleotide sequence ID" value="NM_172852.3"/>
</dbReference>
<dbReference type="SMR" id="Q8CDC0"/>
<dbReference type="FunCoup" id="Q8CDC0">
    <property type="interactions" value="142"/>
</dbReference>
<dbReference type="STRING" id="10090.ENSMUSP00000027564"/>
<dbReference type="MEROPS" id="I04.017"/>
<dbReference type="iPTMnet" id="Q8CDC0"/>
<dbReference type="PhosphoSitePlus" id="Q8CDC0"/>
<dbReference type="PaxDb" id="10090-ENSMUSP00000027564"/>
<dbReference type="PeptideAtlas" id="Q8CDC0"/>
<dbReference type="ProteomicsDB" id="261494">
    <molecule id="Q8CDC0-1"/>
</dbReference>
<dbReference type="ProteomicsDB" id="261495">
    <molecule id="Q8CDC0-2"/>
</dbReference>
<dbReference type="Pumba" id="Q8CDC0"/>
<dbReference type="Antibodypedia" id="10046">
    <property type="antibodies" value="236 antibodies from 29 providers"/>
</dbReference>
<dbReference type="DNASU" id="241196"/>
<dbReference type="Ensembl" id="ENSMUST00000027564.8">
    <molecule id="Q8CDC0-1"/>
    <property type="protein sequence ID" value="ENSMUSP00000027564.2"/>
    <property type="gene ID" value="ENSMUSG00000048775.11"/>
</dbReference>
<dbReference type="GeneID" id="241196"/>
<dbReference type="KEGG" id="mmu:241196"/>
<dbReference type="UCSC" id="uc007chf.1">
    <molecule id="Q8CDC0-1"/>
    <property type="organism name" value="mouse"/>
</dbReference>
<dbReference type="UCSC" id="uc011wqd.1">
    <molecule id="Q8CDC0-2"/>
    <property type="organism name" value="mouse"/>
</dbReference>
<dbReference type="AGR" id="MGI:3042250"/>
<dbReference type="CTD" id="5275"/>
<dbReference type="MGI" id="MGI:3042250">
    <property type="gene designation" value="Serpinb13"/>
</dbReference>
<dbReference type="VEuPathDB" id="HostDB:ENSMUSG00000048775"/>
<dbReference type="eggNOG" id="KOG2392">
    <property type="taxonomic scope" value="Eukaryota"/>
</dbReference>
<dbReference type="GeneTree" id="ENSGT00940000162214"/>
<dbReference type="HOGENOM" id="CLU_023330_0_2_1"/>
<dbReference type="InParanoid" id="Q8CDC0"/>
<dbReference type="OMA" id="RSGLHAQ"/>
<dbReference type="OrthoDB" id="671595at2759"/>
<dbReference type="PhylomeDB" id="Q8CDC0"/>
<dbReference type="TreeFam" id="TF352619"/>
<dbReference type="Reactome" id="R-MMU-8939242">
    <property type="pathway name" value="RUNX1 regulates transcription of genes involved in differentiation of keratinocytes"/>
</dbReference>
<dbReference type="BioGRID-ORCS" id="241196">
    <property type="hits" value="3 hits in 79 CRISPR screens"/>
</dbReference>
<dbReference type="PRO" id="PR:Q8CDC0"/>
<dbReference type="Proteomes" id="UP000000589">
    <property type="component" value="Chromosome 1"/>
</dbReference>
<dbReference type="RNAct" id="Q8CDC0">
    <property type="molecule type" value="protein"/>
</dbReference>
<dbReference type="Bgee" id="ENSMUSG00000048775">
    <property type="expression patterns" value="Expressed in esophagus and 3 other cell types or tissues"/>
</dbReference>
<dbReference type="ExpressionAtlas" id="Q8CDC0">
    <property type="expression patterns" value="baseline and differential"/>
</dbReference>
<dbReference type="GO" id="GO:0005829">
    <property type="term" value="C:cytosol"/>
    <property type="evidence" value="ECO:0007669"/>
    <property type="project" value="Ensembl"/>
</dbReference>
<dbReference type="GO" id="GO:0005615">
    <property type="term" value="C:extracellular space"/>
    <property type="evidence" value="ECO:0007669"/>
    <property type="project" value="InterPro"/>
</dbReference>
<dbReference type="GO" id="GO:0016607">
    <property type="term" value="C:nuclear speck"/>
    <property type="evidence" value="ECO:0007669"/>
    <property type="project" value="Ensembl"/>
</dbReference>
<dbReference type="GO" id="GO:0004869">
    <property type="term" value="F:cysteine-type endopeptidase inhibitor activity"/>
    <property type="evidence" value="ECO:0007669"/>
    <property type="project" value="Ensembl"/>
</dbReference>
<dbReference type="GO" id="GO:0002020">
    <property type="term" value="F:protease binding"/>
    <property type="evidence" value="ECO:0007669"/>
    <property type="project" value="Ensembl"/>
</dbReference>
<dbReference type="GO" id="GO:0004867">
    <property type="term" value="F:serine-type endopeptidase inhibitor activity"/>
    <property type="evidence" value="ECO:0007669"/>
    <property type="project" value="UniProtKB-KW"/>
</dbReference>
<dbReference type="GO" id="GO:1902173">
    <property type="term" value="P:negative regulation of keratinocyte apoptotic process"/>
    <property type="evidence" value="ECO:0007669"/>
    <property type="project" value="Ensembl"/>
</dbReference>
<dbReference type="CDD" id="cd19572">
    <property type="entry name" value="serpinB13_headpin"/>
    <property type="match status" value="1"/>
</dbReference>
<dbReference type="FunFam" id="3.30.497.10:FF:000098">
    <property type="entry name" value="Serpin family B member 13"/>
    <property type="match status" value="1"/>
</dbReference>
<dbReference type="FunFam" id="2.30.39.10:FF:000001">
    <property type="entry name" value="Serpin family B member 2"/>
    <property type="match status" value="1"/>
</dbReference>
<dbReference type="Gene3D" id="2.30.39.10">
    <property type="entry name" value="Alpha-1-antitrypsin, domain 1"/>
    <property type="match status" value="1"/>
</dbReference>
<dbReference type="Gene3D" id="3.30.497.10">
    <property type="entry name" value="Antithrombin, subunit I, domain 2"/>
    <property type="match status" value="1"/>
</dbReference>
<dbReference type="InterPro" id="IPR023795">
    <property type="entry name" value="Serpin_CS"/>
</dbReference>
<dbReference type="InterPro" id="IPR023796">
    <property type="entry name" value="Serpin_dom"/>
</dbReference>
<dbReference type="InterPro" id="IPR000215">
    <property type="entry name" value="Serpin_fam"/>
</dbReference>
<dbReference type="InterPro" id="IPR036186">
    <property type="entry name" value="Serpin_sf"/>
</dbReference>
<dbReference type="InterPro" id="IPR042178">
    <property type="entry name" value="Serpin_sf_1"/>
</dbReference>
<dbReference type="InterPro" id="IPR042185">
    <property type="entry name" value="Serpin_sf_2"/>
</dbReference>
<dbReference type="PANTHER" id="PTHR11461">
    <property type="entry name" value="SERINE PROTEASE INHIBITOR, SERPIN"/>
    <property type="match status" value="1"/>
</dbReference>
<dbReference type="PANTHER" id="PTHR11461:SF161">
    <property type="entry name" value="SERPIN B13"/>
    <property type="match status" value="1"/>
</dbReference>
<dbReference type="Pfam" id="PF00079">
    <property type="entry name" value="Serpin"/>
    <property type="match status" value="1"/>
</dbReference>
<dbReference type="SMART" id="SM00093">
    <property type="entry name" value="SERPIN"/>
    <property type="match status" value="1"/>
</dbReference>
<dbReference type="SUPFAM" id="SSF56574">
    <property type="entry name" value="Serpins"/>
    <property type="match status" value="1"/>
</dbReference>
<dbReference type="PROSITE" id="PS00284">
    <property type="entry name" value="SERPIN"/>
    <property type="match status" value="1"/>
</dbReference>
<proteinExistence type="evidence at transcript level"/>
<feature type="chain" id="PRO_0000094122" description="Serpin B13">
    <location>
        <begin position="1"/>
        <end position="389"/>
    </location>
</feature>
<feature type="site" description="Reactive bond" evidence="1">
    <location>
        <begin position="354"/>
        <end position="355"/>
    </location>
</feature>
<feature type="splice variant" id="VSP_039855" description="In isoform 2." evidence="2">
    <location>
        <begin position="1"/>
        <end position="211"/>
    </location>
</feature>
<feature type="sequence conflict" description="In Ref. 1; BAC27072." evidence="3" ref="1">
    <original>L</original>
    <variation>Q</variation>
    <location>
        <position position="295"/>
    </location>
</feature>
<gene>
    <name type="primary">Serpinb13</name>
</gene>
<organism>
    <name type="scientific">Mus musculus</name>
    <name type="common">Mouse</name>
    <dbReference type="NCBI Taxonomy" id="10090"/>
    <lineage>
        <taxon>Eukaryota</taxon>
        <taxon>Metazoa</taxon>
        <taxon>Chordata</taxon>
        <taxon>Craniata</taxon>
        <taxon>Vertebrata</taxon>
        <taxon>Euteleostomi</taxon>
        <taxon>Mammalia</taxon>
        <taxon>Eutheria</taxon>
        <taxon>Euarchontoglires</taxon>
        <taxon>Glires</taxon>
        <taxon>Rodentia</taxon>
        <taxon>Myomorpha</taxon>
        <taxon>Muroidea</taxon>
        <taxon>Muridae</taxon>
        <taxon>Murinae</taxon>
        <taxon>Mus</taxon>
        <taxon>Mus</taxon>
    </lineage>
</organism>
<sequence>MDSLGTAATQFLFDLFKELNKTNDGNVFFSPVGISTAIGMIILGTRGATASELQKVLYTEQGTESSRIKSEEEEIEKREEIHHQLQMLLTEISKFSNDYDLIISNRLFGEKTYLFLQKYIDYVEKYYHASLEPVDFVNAADESRKKINSWVESQTNVKVKDLFPEGSLNSSTKLVLINTVYFKGLWDREFKKEHTKEEDFWLNKNLSKPVQMMALCSSFNFTFLEDLQAKIVGIPYKNNDISMFVLLPNDIDGLEKIMDKMSPEKLVEWTSPGHLEQRRVDLRLPRLQVEETYDLEPVLEAVGIHSAFSEHADYSGMSARSGLHAQNFLHRSFLVVTEEGVEATAGTGVGLKVSSAASCELVHCNHPFLFFIRHRESDSILFFGKFSSP</sequence>
<accession>Q8CDC0</accession>
<accession>Q148S5</accession>
<accession>Q148S6</accession>
<name>SPB13_MOUSE</name>
<protein>
    <recommendedName>
        <fullName>Serpin B13</fullName>
    </recommendedName>
</protein>
<reference key="1">
    <citation type="journal article" date="2005" name="Science">
        <title>The transcriptional landscape of the mammalian genome.</title>
        <authorList>
            <person name="Carninci P."/>
            <person name="Kasukawa T."/>
            <person name="Katayama S."/>
            <person name="Gough J."/>
            <person name="Frith M.C."/>
            <person name="Maeda N."/>
            <person name="Oyama R."/>
            <person name="Ravasi T."/>
            <person name="Lenhard B."/>
            <person name="Wells C."/>
            <person name="Kodzius R."/>
            <person name="Shimokawa K."/>
            <person name="Bajic V.B."/>
            <person name="Brenner S.E."/>
            <person name="Batalov S."/>
            <person name="Forrest A.R."/>
            <person name="Zavolan M."/>
            <person name="Davis M.J."/>
            <person name="Wilming L.G."/>
            <person name="Aidinis V."/>
            <person name="Allen J.E."/>
            <person name="Ambesi-Impiombato A."/>
            <person name="Apweiler R."/>
            <person name="Aturaliya R.N."/>
            <person name="Bailey T.L."/>
            <person name="Bansal M."/>
            <person name="Baxter L."/>
            <person name="Beisel K.W."/>
            <person name="Bersano T."/>
            <person name="Bono H."/>
            <person name="Chalk A.M."/>
            <person name="Chiu K.P."/>
            <person name="Choudhary V."/>
            <person name="Christoffels A."/>
            <person name="Clutterbuck D.R."/>
            <person name="Crowe M.L."/>
            <person name="Dalla E."/>
            <person name="Dalrymple B.P."/>
            <person name="de Bono B."/>
            <person name="Della Gatta G."/>
            <person name="di Bernardo D."/>
            <person name="Down T."/>
            <person name="Engstrom P."/>
            <person name="Fagiolini M."/>
            <person name="Faulkner G."/>
            <person name="Fletcher C.F."/>
            <person name="Fukushima T."/>
            <person name="Furuno M."/>
            <person name="Futaki S."/>
            <person name="Gariboldi M."/>
            <person name="Georgii-Hemming P."/>
            <person name="Gingeras T.R."/>
            <person name="Gojobori T."/>
            <person name="Green R.E."/>
            <person name="Gustincich S."/>
            <person name="Harbers M."/>
            <person name="Hayashi Y."/>
            <person name="Hensch T.K."/>
            <person name="Hirokawa N."/>
            <person name="Hill D."/>
            <person name="Huminiecki L."/>
            <person name="Iacono M."/>
            <person name="Ikeo K."/>
            <person name="Iwama A."/>
            <person name="Ishikawa T."/>
            <person name="Jakt M."/>
            <person name="Kanapin A."/>
            <person name="Katoh M."/>
            <person name="Kawasawa Y."/>
            <person name="Kelso J."/>
            <person name="Kitamura H."/>
            <person name="Kitano H."/>
            <person name="Kollias G."/>
            <person name="Krishnan S.P."/>
            <person name="Kruger A."/>
            <person name="Kummerfeld S.K."/>
            <person name="Kurochkin I.V."/>
            <person name="Lareau L.F."/>
            <person name="Lazarevic D."/>
            <person name="Lipovich L."/>
            <person name="Liu J."/>
            <person name="Liuni S."/>
            <person name="McWilliam S."/>
            <person name="Madan Babu M."/>
            <person name="Madera M."/>
            <person name="Marchionni L."/>
            <person name="Matsuda H."/>
            <person name="Matsuzawa S."/>
            <person name="Miki H."/>
            <person name="Mignone F."/>
            <person name="Miyake S."/>
            <person name="Morris K."/>
            <person name="Mottagui-Tabar S."/>
            <person name="Mulder N."/>
            <person name="Nakano N."/>
            <person name="Nakauchi H."/>
            <person name="Ng P."/>
            <person name="Nilsson R."/>
            <person name="Nishiguchi S."/>
            <person name="Nishikawa S."/>
            <person name="Nori F."/>
            <person name="Ohara O."/>
            <person name="Okazaki Y."/>
            <person name="Orlando V."/>
            <person name="Pang K.C."/>
            <person name="Pavan W.J."/>
            <person name="Pavesi G."/>
            <person name="Pesole G."/>
            <person name="Petrovsky N."/>
            <person name="Piazza S."/>
            <person name="Reed J."/>
            <person name="Reid J.F."/>
            <person name="Ring B.Z."/>
            <person name="Ringwald M."/>
            <person name="Rost B."/>
            <person name="Ruan Y."/>
            <person name="Salzberg S.L."/>
            <person name="Sandelin A."/>
            <person name="Schneider C."/>
            <person name="Schoenbach C."/>
            <person name="Sekiguchi K."/>
            <person name="Semple C.A."/>
            <person name="Seno S."/>
            <person name="Sessa L."/>
            <person name="Sheng Y."/>
            <person name="Shibata Y."/>
            <person name="Shimada H."/>
            <person name="Shimada K."/>
            <person name="Silva D."/>
            <person name="Sinclair B."/>
            <person name="Sperling S."/>
            <person name="Stupka E."/>
            <person name="Sugiura K."/>
            <person name="Sultana R."/>
            <person name="Takenaka Y."/>
            <person name="Taki K."/>
            <person name="Tammoja K."/>
            <person name="Tan S.L."/>
            <person name="Tang S."/>
            <person name="Taylor M.S."/>
            <person name="Tegner J."/>
            <person name="Teichmann S.A."/>
            <person name="Ueda H.R."/>
            <person name="van Nimwegen E."/>
            <person name="Verardo R."/>
            <person name="Wei C.L."/>
            <person name="Yagi K."/>
            <person name="Yamanishi H."/>
            <person name="Zabarovsky E."/>
            <person name="Zhu S."/>
            <person name="Zimmer A."/>
            <person name="Hide W."/>
            <person name="Bult C."/>
            <person name="Grimmond S.M."/>
            <person name="Teasdale R.D."/>
            <person name="Liu E.T."/>
            <person name="Brusic V."/>
            <person name="Quackenbush J."/>
            <person name="Wahlestedt C."/>
            <person name="Mattick J.S."/>
            <person name="Hume D.A."/>
            <person name="Kai C."/>
            <person name="Sasaki D."/>
            <person name="Tomaru Y."/>
            <person name="Fukuda S."/>
            <person name="Kanamori-Katayama M."/>
            <person name="Suzuki M."/>
            <person name="Aoki J."/>
            <person name="Arakawa T."/>
            <person name="Iida J."/>
            <person name="Imamura K."/>
            <person name="Itoh M."/>
            <person name="Kato T."/>
            <person name="Kawaji H."/>
            <person name="Kawagashira N."/>
            <person name="Kawashima T."/>
            <person name="Kojima M."/>
            <person name="Kondo S."/>
            <person name="Konno H."/>
            <person name="Nakano K."/>
            <person name="Ninomiya N."/>
            <person name="Nishio T."/>
            <person name="Okada M."/>
            <person name="Plessy C."/>
            <person name="Shibata K."/>
            <person name="Shiraki T."/>
            <person name="Suzuki S."/>
            <person name="Tagami M."/>
            <person name="Waki K."/>
            <person name="Watahiki A."/>
            <person name="Okamura-Oho Y."/>
            <person name="Suzuki H."/>
            <person name="Kawai J."/>
            <person name="Hayashizaki Y."/>
        </authorList>
    </citation>
    <scope>NUCLEOTIDE SEQUENCE [LARGE SCALE MRNA] (ISOFORM 1)</scope>
    <source>
        <strain>C57BL/6J</strain>
        <tissue>Head</tissue>
    </source>
</reference>
<reference key="2">
    <citation type="submission" date="2005-09" db="EMBL/GenBank/DDBJ databases">
        <authorList>
            <person name="Mural R.J."/>
            <person name="Adams M.D."/>
            <person name="Myers E.W."/>
            <person name="Smith H.O."/>
            <person name="Venter J.C."/>
        </authorList>
    </citation>
    <scope>NUCLEOTIDE SEQUENCE [LARGE SCALE GENOMIC DNA]</scope>
</reference>
<reference key="3">
    <citation type="journal article" date="2004" name="Genome Res.">
        <title>The status, quality, and expansion of the NIH full-length cDNA project: the Mammalian Gene Collection (MGC).</title>
        <authorList>
            <consortium name="The MGC Project Team"/>
        </authorList>
    </citation>
    <scope>NUCLEOTIDE SEQUENCE [LARGE SCALE MRNA] (ISOFORMS 1 AND 2)</scope>
</reference>
<comment type="function">
    <text evidence="1">May play a role in the proliferation or differentiation of keratinocytes.</text>
</comment>
<comment type="subcellular location">
    <subcellularLocation>
        <location evidence="1">Cytoplasm</location>
    </subcellularLocation>
</comment>
<comment type="alternative products">
    <event type="alternative splicing"/>
    <isoform>
        <id>Q8CDC0-1</id>
        <name>1</name>
        <sequence type="displayed"/>
    </isoform>
    <isoform>
        <id>Q8CDC0-2</id>
        <name>2</name>
        <sequence type="described" ref="VSP_039855"/>
    </isoform>
</comment>
<comment type="similarity">
    <text evidence="3">Belongs to the serpin family. Ov-serpin subfamily.</text>
</comment>
<evidence type="ECO:0000250" key="1"/>
<evidence type="ECO:0000303" key="2">
    <source>
    </source>
</evidence>
<evidence type="ECO:0000305" key="3"/>
<keyword id="KW-0025">Alternative splicing</keyword>
<keyword id="KW-0963">Cytoplasm</keyword>
<keyword id="KW-0646">Protease inhibitor</keyword>
<keyword id="KW-1185">Reference proteome</keyword>
<keyword id="KW-0722">Serine protease inhibitor</keyword>